<keyword id="KW-0067">ATP-binding</keyword>
<keyword id="KW-0963">Cytoplasm</keyword>
<keyword id="KW-0347">Helicase</keyword>
<keyword id="KW-0378">Hydrolase</keyword>
<keyword id="KW-1017">Isopeptide bond</keyword>
<keyword id="KW-0547">Nucleotide-binding</keyword>
<keyword id="KW-0539">Nucleus</keyword>
<keyword id="KW-0597">Phosphoprotein</keyword>
<keyword id="KW-1185">Reference proteome</keyword>
<keyword id="KW-0694">RNA-binding</keyword>
<keyword id="KW-0832">Ubl conjugation</keyword>
<accession>Q99MJ9</accession>
<comment type="function">
    <text evidence="1">ATP-dependent RNA helicase that may play a role in various aspects of RNA metabolism including pre-mRNA splicing or ribosomal RNA production. Also acts as a viral restriction factor and promotes the activation of the NF-kappa-B and IRF3 signaling pathways following its stimulation with viral RNA or infection with RNA and DNA viruses. For instance, decreases vaccinia virus, herpes simplex virus, Zika virus or dengue virus replication during the early stage of infection. Mechanistically, acts via the adapter TICAM1 and independently of the DDX1-DDX21-DHX36 helicase complex to induce the production of interferon-beta.</text>
</comment>
<comment type="catalytic activity">
    <reaction evidence="1">
        <text>ATP + H2O = ADP + phosphate + H(+)</text>
        <dbReference type="Rhea" id="RHEA:13065"/>
        <dbReference type="ChEBI" id="CHEBI:15377"/>
        <dbReference type="ChEBI" id="CHEBI:15378"/>
        <dbReference type="ChEBI" id="CHEBI:30616"/>
        <dbReference type="ChEBI" id="CHEBI:43474"/>
        <dbReference type="ChEBI" id="CHEBI:456216"/>
        <dbReference type="EC" id="3.6.4.13"/>
    </reaction>
</comment>
<comment type="subunit">
    <text evidence="1">Interacts with C1QBP. Interacts with the ubiquitin ligase CTLH complex through GID4. Interacts with TICAM1.</text>
</comment>
<comment type="subcellular location">
    <subcellularLocation>
        <location evidence="1">Nucleus</location>
        <location evidence="1">Nucleolus</location>
    </subcellularLocation>
    <subcellularLocation>
        <location evidence="1">Cytoplasm</location>
    </subcellularLocation>
    <text evidence="1">Accumulates in the cytoplasm to activate signaling upstream of IRF3 during viral infection.</text>
</comment>
<comment type="similarity">
    <text evidence="7">Belongs to the DEAD box helicase family. DDX21/DDX50 subfamily.</text>
</comment>
<protein>
    <recommendedName>
        <fullName>ATP-dependent RNA helicase DDX50</fullName>
        <ecNumber>3.6.4.13</ecNumber>
    </recommendedName>
    <alternativeName>
        <fullName>DEAD box protein 50</fullName>
    </alternativeName>
    <alternativeName>
        <fullName>Gu-beta</fullName>
    </alternativeName>
    <alternativeName>
        <fullName>Nucleolar protein Gu2</fullName>
    </alternativeName>
</protein>
<organism>
    <name type="scientific">Mus musculus</name>
    <name type="common">Mouse</name>
    <dbReference type="NCBI Taxonomy" id="10090"/>
    <lineage>
        <taxon>Eukaryota</taxon>
        <taxon>Metazoa</taxon>
        <taxon>Chordata</taxon>
        <taxon>Craniata</taxon>
        <taxon>Vertebrata</taxon>
        <taxon>Euteleostomi</taxon>
        <taxon>Mammalia</taxon>
        <taxon>Eutheria</taxon>
        <taxon>Euarchontoglires</taxon>
        <taxon>Glires</taxon>
        <taxon>Rodentia</taxon>
        <taxon>Myomorpha</taxon>
        <taxon>Muroidea</taxon>
        <taxon>Muridae</taxon>
        <taxon>Murinae</taxon>
        <taxon>Mus</taxon>
        <taxon>Mus</taxon>
    </lineage>
</organism>
<feature type="chain" id="PRO_0000055055" description="ATP-dependent RNA helicase DDX50">
    <location>
        <begin position="1"/>
        <end position="734"/>
    </location>
</feature>
<feature type="domain" description="Helicase ATP-binding" evidence="4">
    <location>
        <begin position="165"/>
        <end position="344"/>
    </location>
</feature>
<feature type="domain" description="Helicase C-terminal" evidence="5">
    <location>
        <begin position="377"/>
        <end position="521"/>
    </location>
</feature>
<feature type="region of interest" description="Disordered" evidence="6">
    <location>
        <begin position="1"/>
        <end position="131"/>
    </location>
</feature>
<feature type="region of interest" description="Disordered" evidence="6">
    <location>
        <begin position="664"/>
        <end position="734"/>
    </location>
</feature>
<feature type="short sequence motif" description="Q motif">
    <location>
        <begin position="134"/>
        <end position="162"/>
    </location>
</feature>
<feature type="short sequence motif" description="DEVD box">
    <location>
        <begin position="287"/>
        <end position="290"/>
    </location>
</feature>
<feature type="compositionally biased region" description="Acidic residues" evidence="6">
    <location>
        <begin position="11"/>
        <end position="20"/>
    </location>
</feature>
<feature type="compositionally biased region" description="Basic and acidic residues" evidence="6">
    <location>
        <begin position="38"/>
        <end position="51"/>
    </location>
</feature>
<feature type="compositionally biased region" description="Basic and acidic residues" evidence="6">
    <location>
        <begin position="67"/>
        <end position="86"/>
    </location>
</feature>
<feature type="compositionally biased region" description="Basic and acidic residues" evidence="6">
    <location>
        <begin position="115"/>
        <end position="131"/>
    </location>
</feature>
<feature type="compositionally biased region" description="Gly residues" evidence="6">
    <location>
        <begin position="679"/>
        <end position="698"/>
    </location>
</feature>
<feature type="compositionally biased region" description="Low complexity" evidence="6">
    <location>
        <begin position="699"/>
        <end position="709"/>
    </location>
</feature>
<feature type="compositionally biased region" description="Basic residues" evidence="6">
    <location>
        <begin position="717"/>
        <end position="734"/>
    </location>
</feature>
<feature type="binding site" evidence="4">
    <location>
        <begin position="178"/>
        <end position="185"/>
    </location>
    <ligand>
        <name>ATP</name>
        <dbReference type="ChEBI" id="CHEBI:30616"/>
    </ligand>
</feature>
<feature type="modified residue" description="Phosphoserine" evidence="1">
    <location>
        <position position="41"/>
    </location>
</feature>
<feature type="modified residue" description="Phosphoserine" evidence="1">
    <location>
        <position position="81"/>
    </location>
</feature>
<feature type="modified residue" description="Phosphoserine" evidence="1">
    <location>
        <position position="85"/>
    </location>
</feature>
<feature type="modified residue" description="Phosphoserine" evidence="2">
    <location>
        <position position="113"/>
    </location>
</feature>
<feature type="modified residue" description="Phosphoserine" evidence="2">
    <location>
        <position position="119"/>
    </location>
</feature>
<feature type="modified residue" description="Phosphoserine" evidence="2">
    <location>
        <position position="120"/>
    </location>
</feature>
<feature type="modified residue" description="Phosphothreonine" evidence="3">
    <location>
        <position position="244"/>
    </location>
</feature>
<feature type="modified residue" description="Phosphoserine" evidence="3">
    <location>
        <position position="515"/>
    </location>
</feature>
<feature type="cross-link" description="Glycyl lysine isopeptide (Lys-Gly) (interchain with G-Cter in SUMO2)" evidence="1">
    <location>
        <position position="122"/>
    </location>
</feature>
<name>DDX50_MOUSE</name>
<dbReference type="EC" id="3.6.4.13"/>
<dbReference type="EMBL" id="AF334104">
    <property type="protein sequence ID" value="AAK29403.1"/>
    <property type="molecule type" value="mRNA"/>
</dbReference>
<dbReference type="CCDS" id="CCDS23892.1"/>
<dbReference type="RefSeq" id="NP_444413.1">
    <property type="nucleotide sequence ID" value="NM_053183.3"/>
</dbReference>
<dbReference type="SMR" id="Q99MJ9"/>
<dbReference type="BioGRID" id="220470">
    <property type="interactions" value="3"/>
</dbReference>
<dbReference type="FunCoup" id="Q99MJ9">
    <property type="interactions" value="2819"/>
</dbReference>
<dbReference type="STRING" id="10090.ENSMUSP00000020270"/>
<dbReference type="iPTMnet" id="Q99MJ9"/>
<dbReference type="PhosphoSitePlus" id="Q99MJ9"/>
<dbReference type="jPOST" id="Q99MJ9"/>
<dbReference type="PaxDb" id="10090-ENSMUSP00000020270"/>
<dbReference type="PeptideAtlas" id="Q99MJ9"/>
<dbReference type="ProteomicsDB" id="279855"/>
<dbReference type="Pumba" id="Q99MJ9"/>
<dbReference type="Antibodypedia" id="14671">
    <property type="antibodies" value="172 antibodies from 30 providers"/>
</dbReference>
<dbReference type="DNASU" id="94213"/>
<dbReference type="Ensembl" id="ENSMUST00000020270.6">
    <property type="protein sequence ID" value="ENSMUSP00000020270.5"/>
    <property type="gene ID" value="ENSMUSG00000020076.8"/>
</dbReference>
<dbReference type="GeneID" id="94213"/>
<dbReference type="KEGG" id="mmu:94213"/>
<dbReference type="UCSC" id="uc007fho.1">
    <property type="organism name" value="mouse"/>
</dbReference>
<dbReference type="AGR" id="MGI:2182303"/>
<dbReference type="CTD" id="79009"/>
<dbReference type="MGI" id="MGI:2182303">
    <property type="gene designation" value="Ddx50"/>
</dbReference>
<dbReference type="VEuPathDB" id="HostDB:ENSMUSG00000020076"/>
<dbReference type="eggNOG" id="KOG0331">
    <property type="taxonomic scope" value="Eukaryota"/>
</dbReference>
<dbReference type="GeneTree" id="ENSGT00940000155901"/>
<dbReference type="HOGENOM" id="CLU_003041_20_0_1"/>
<dbReference type="InParanoid" id="Q99MJ9"/>
<dbReference type="OMA" id="EHTMQRF"/>
<dbReference type="OrthoDB" id="4255at2759"/>
<dbReference type="PhylomeDB" id="Q99MJ9"/>
<dbReference type="TreeFam" id="TF328622"/>
<dbReference type="BioGRID-ORCS" id="94213">
    <property type="hits" value="1 hit in 78 CRISPR screens"/>
</dbReference>
<dbReference type="ChiTaRS" id="Ddx50">
    <property type="organism name" value="mouse"/>
</dbReference>
<dbReference type="PRO" id="PR:Q99MJ9"/>
<dbReference type="Proteomes" id="UP000000589">
    <property type="component" value="Chromosome 10"/>
</dbReference>
<dbReference type="RNAct" id="Q99MJ9">
    <property type="molecule type" value="protein"/>
</dbReference>
<dbReference type="Bgee" id="ENSMUSG00000020076">
    <property type="expression patterns" value="Expressed in vestibular epithelium and 247 other cell types or tissues"/>
</dbReference>
<dbReference type="ExpressionAtlas" id="Q99MJ9">
    <property type="expression patterns" value="baseline and differential"/>
</dbReference>
<dbReference type="GO" id="GO:0005737">
    <property type="term" value="C:cytoplasm"/>
    <property type="evidence" value="ECO:0007669"/>
    <property type="project" value="UniProtKB-SubCell"/>
</dbReference>
<dbReference type="GO" id="GO:0005730">
    <property type="term" value="C:nucleolus"/>
    <property type="evidence" value="ECO:0007669"/>
    <property type="project" value="UniProtKB-SubCell"/>
</dbReference>
<dbReference type="GO" id="GO:0005886">
    <property type="term" value="C:plasma membrane"/>
    <property type="evidence" value="ECO:0007669"/>
    <property type="project" value="Ensembl"/>
</dbReference>
<dbReference type="GO" id="GO:0005524">
    <property type="term" value="F:ATP binding"/>
    <property type="evidence" value="ECO:0007669"/>
    <property type="project" value="UniProtKB-KW"/>
</dbReference>
<dbReference type="GO" id="GO:0016887">
    <property type="term" value="F:ATP hydrolysis activity"/>
    <property type="evidence" value="ECO:0007669"/>
    <property type="project" value="RHEA"/>
</dbReference>
<dbReference type="GO" id="GO:0003723">
    <property type="term" value="F:RNA binding"/>
    <property type="evidence" value="ECO:0007669"/>
    <property type="project" value="UniProtKB-KW"/>
</dbReference>
<dbReference type="GO" id="GO:0003724">
    <property type="term" value="F:RNA helicase activity"/>
    <property type="evidence" value="ECO:0007669"/>
    <property type="project" value="UniProtKB-EC"/>
</dbReference>
<dbReference type="CDD" id="cd17944">
    <property type="entry name" value="DEADc_DDX21_DDX50"/>
    <property type="match status" value="1"/>
</dbReference>
<dbReference type="CDD" id="cd12936">
    <property type="entry name" value="GUCT_RHII_Gualpha_beta"/>
    <property type="match status" value="1"/>
</dbReference>
<dbReference type="CDD" id="cd18787">
    <property type="entry name" value="SF2_C_DEAD"/>
    <property type="match status" value="1"/>
</dbReference>
<dbReference type="FunFam" id="3.30.70.2280:FF:000001">
    <property type="entry name" value="ATP-dependent RNA helicase DDX50"/>
    <property type="match status" value="1"/>
</dbReference>
<dbReference type="FunFam" id="3.40.50.300:FF:000666">
    <property type="entry name" value="ATP-dependent RNA helicase DDX50"/>
    <property type="match status" value="1"/>
</dbReference>
<dbReference type="FunFam" id="3.40.50.300:FF:001045">
    <property type="entry name" value="ATP-dependent RNA helicase DDX50 isoform X1"/>
    <property type="match status" value="1"/>
</dbReference>
<dbReference type="Gene3D" id="3.30.70.2280">
    <property type="match status" value="1"/>
</dbReference>
<dbReference type="Gene3D" id="3.40.50.300">
    <property type="entry name" value="P-loop containing nucleotide triphosphate hydrolases"/>
    <property type="match status" value="2"/>
</dbReference>
<dbReference type="InterPro" id="IPR011545">
    <property type="entry name" value="DEAD/DEAH_box_helicase_dom"/>
</dbReference>
<dbReference type="InterPro" id="IPR050079">
    <property type="entry name" value="DEAD_box_RNA_helicase"/>
</dbReference>
<dbReference type="InterPro" id="IPR012562">
    <property type="entry name" value="GUCT"/>
</dbReference>
<dbReference type="InterPro" id="IPR014001">
    <property type="entry name" value="Helicase_ATP-bd"/>
</dbReference>
<dbReference type="InterPro" id="IPR001650">
    <property type="entry name" value="Helicase_C-like"/>
</dbReference>
<dbReference type="InterPro" id="IPR027417">
    <property type="entry name" value="P-loop_NTPase"/>
</dbReference>
<dbReference type="InterPro" id="IPR035979">
    <property type="entry name" value="RBD_domain_sf"/>
</dbReference>
<dbReference type="PANTHER" id="PTHR47959">
    <property type="entry name" value="ATP-DEPENDENT RNA HELICASE RHLE-RELATED"/>
    <property type="match status" value="1"/>
</dbReference>
<dbReference type="PANTHER" id="PTHR47959:SF19">
    <property type="entry name" value="NUCLEOLAR RNA HELICASE 2-A"/>
    <property type="match status" value="1"/>
</dbReference>
<dbReference type="Pfam" id="PF00270">
    <property type="entry name" value="DEAD"/>
    <property type="match status" value="1"/>
</dbReference>
<dbReference type="Pfam" id="PF08152">
    <property type="entry name" value="GUCT"/>
    <property type="match status" value="1"/>
</dbReference>
<dbReference type="Pfam" id="PF00271">
    <property type="entry name" value="Helicase_C"/>
    <property type="match status" value="1"/>
</dbReference>
<dbReference type="SMART" id="SM00487">
    <property type="entry name" value="DEXDc"/>
    <property type="match status" value="1"/>
</dbReference>
<dbReference type="SMART" id="SM00490">
    <property type="entry name" value="HELICc"/>
    <property type="match status" value="1"/>
</dbReference>
<dbReference type="SUPFAM" id="SSF52540">
    <property type="entry name" value="P-loop containing nucleoside triphosphate hydrolases"/>
    <property type="match status" value="1"/>
</dbReference>
<dbReference type="SUPFAM" id="SSF54928">
    <property type="entry name" value="RNA-binding domain, RBD"/>
    <property type="match status" value="1"/>
</dbReference>
<dbReference type="PROSITE" id="PS51192">
    <property type="entry name" value="HELICASE_ATP_BIND_1"/>
    <property type="match status" value="1"/>
</dbReference>
<dbReference type="PROSITE" id="PS51194">
    <property type="entry name" value="HELICASE_CTER"/>
    <property type="match status" value="1"/>
</dbReference>
<dbReference type="PROSITE" id="PS51195">
    <property type="entry name" value="Q_MOTIF"/>
    <property type="match status" value="1"/>
</dbReference>
<reference key="1">
    <citation type="journal article" date="2002" name="Gene">
        <title>Genomic structure of newly identified paralogue of RNA helicase II/Gu: detection of pseudogenes and multiple alternatively spliced mRNAs.</title>
        <authorList>
            <person name="Valdez B.C."/>
            <person name="Yang H."/>
            <person name="Hong E."/>
            <person name="Sequitin A.M."/>
        </authorList>
    </citation>
    <scope>NUCLEOTIDE SEQUENCE [MRNA]</scope>
</reference>
<sequence>MPGKLLWGDIMELEAPLEESESQRKERQKSDRRKSRHHSESEERTETRENGVTDDLDAPKPKKAKMREKLNGDTKEGLRFSDEFSPSHKSRRKDLPNGDVDEYEKRSKRVSSSENSHKSSDKAEETLTREQKEGAFSNFSISEETIKLLKGRGVTYLFPIQVKTFGPVYEGKDLIAQARTGTGKTFSFAIPLIERLQRNQETIKKSRSPKVLVLAPTRELANQVAKDFKDITRKLSVACFYGGTSYQSQINQIRNGIDILVGTPGRIKDHLQSGRLDLSKLRHVVLDEVDQMLDLGFAEQVEDIIHESYKTDSEDNPQTLLFSATCPQWVYKVAKKYMKSRYEQVDLVGKMTQKAATTVEHLAIQCHWSQRPAVIGDVLQVYSGSEGRAIIFCETKKNVTEMAMNPHIKQNAQCLHGDIAQSQREITLKGFREGSFKVLVATNVAARGLDIPEVDLVIQSSPPQDVESYIHRSGRTGRAGRTGICVCFYQPRERGQLRYVEQKAGITFKRVGVPSTMDLVKSKSMDAIRSLASVSYAAVDFFRPSAQRLIEEKGAVDALAAALAHISGASSFEPRSLITSDKGFVTMTLESPEEIQDVSCAWKELNRKLSSNAVSHVTRMCLLKGNMGVCFDVPTSESERLQAEWHDSDWILSVPAKLPEIEEYYDGNTSSNPRQRSGWSGGRSGRSGRSGGRSGGRSGRQSRQGSRSGSRQDGRRRSGNRNRSRSGGHKRNFD</sequence>
<evidence type="ECO:0000250" key="1">
    <source>
        <dbReference type="UniProtKB" id="Q9BQ39"/>
    </source>
</evidence>
<evidence type="ECO:0000250" key="2">
    <source>
        <dbReference type="UniProtKB" id="Q9JIK5"/>
    </source>
</evidence>
<evidence type="ECO:0000250" key="3">
    <source>
        <dbReference type="UniProtKB" id="Q9NR30"/>
    </source>
</evidence>
<evidence type="ECO:0000255" key="4">
    <source>
        <dbReference type="PROSITE-ProRule" id="PRU00541"/>
    </source>
</evidence>
<evidence type="ECO:0000255" key="5">
    <source>
        <dbReference type="PROSITE-ProRule" id="PRU00542"/>
    </source>
</evidence>
<evidence type="ECO:0000256" key="6">
    <source>
        <dbReference type="SAM" id="MobiDB-lite"/>
    </source>
</evidence>
<evidence type="ECO:0000305" key="7"/>
<gene>
    <name type="primary">Ddx50</name>
</gene>
<proteinExistence type="evidence at transcript level"/>